<reference key="1">
    <citation type="journal article" date="1995" name="J. Biol. Chem.">
        <title>Characterization of the COOH terminus of non-muscle caldesmon mutants lacking mitosis-specific phosphorylation sites.</title>
        <authorList>
            <person name="Yamashiro S."/>
            <person name="Yamakita Y."/>
            <person name="Yoshida K.-S."/>
            <person name="Takiguchi K."/>
            <person name="Matsumura F."/>
        </authorList>
    </citation>
    <scope>NUCLEOTIDE SEQUENCE [MRNA]</scope>
    <scope>MUTAGENESIS</scope>
    <scope>PHOSPHORYLATION AT SER-249; SER-462; THR-468; SER-491; SER-497 AND SER-527</scope>
    <source>
        <tissue>Liver</tissue>
    </source>
</reference>
<reference key="2">
    <citation type="journal article" date="1991" name="Nature">
        <title>Phosphorylation of non-muscle caldesmon by p34cdc2 kinase during mitosis.</title>
        <authorList>
            <person name="Yamashiro S."/>
            <person name="Yamakita Y."/>
            <person name="Hosoya H."/>
            <person name="Matsumura F."/>
        </authorList>
    </citation>
    <scope>PHOSPHORYLATION BY CDK1</scope>
</reference>
<reference key="3">
    <citation type="journal article" date="2007" name="J. Cell Sci.">
        <title>Cdc2-mediated Schwann cell migration during peripheral nerve regeneration.</title>
        <authorList>
            <person name="Han I.S."/>
            <person name="Seo T.B."/>
            <person name="Kim K.-H."/>
            <person name="Yoon J.-H."/>
            <person name="Yoon S.-J."/>
            <person name="Namgung U."/>
        </authorList>
    </citation>
    <scope>FUNCTION IN SCHWANN CELL MIGRATION</scope>
    <scope>PHOSPHORYLATION BY CDK1</scope>
</reference>
<proteinExistence type="evidence at protein level"/>
<feature type="chain" id="PRO_0000089290" description="Non-muscle caldesmon">
    <location>
        <begin position="1"/>
        <end position="531"/>
    </location>
</feature>
<feature type="region of interest" description="Myosin and calmodulin-binding" evidence="1">
    <location>
        <begin position="20"/>
        <end position="200"/>
    </location>
</feature>
<feature type="region of interest" description="Disordered" evidence="5">
    <location>
        <begin position="21"/>
        <end position="379"/>
    </location>
</feature>
<feature type="region of interest" description="Tropomyosin-binding" evidence="4">
    <location>
        <begin position="303"/>
        <end position="360"/>
    </location>
</feature>
<feature type="region of interest" description="Strong actin-binding" evidence="1">
    <location>
        <begin position="392"/>
        <end position="424"/>
    </location>
</feature>
<feature type="region of interest" description="Tropomyosin-binding" evidence="4">
    <location>
        <begin position="402"/>
        <end position="412"/>
    </location>
</feature>
<feature type="region of interest" description="Calmodulin-binding" evidence="1">
    <location>
        <begin position="454"/>
        <end position="460"/>
    </location>
</feature>
<feature type="region of interest" description="Disordered" evidence="5">
    <location>
        <begin position="458"/>
        <end position="531"/>
    </location>
</feature>
<feature type="region of interest" description="Weak actin-binding" evidence="1">
    <location>
        <begin position="506"/>
        <end position="531"/>
    </location>
</feature>
<feature type="compositionally biased region" description="Basic and acidic residues" evidence="5">
    <location>
        <begin position="41"/>
        <end position="50"/>
    </location>
</feature>
<feature type="compositionally biased region" description="Polar residues" evidence="5">
    <location>
        <begin position="54"/>
        <end position="68"/>
    </location>
</feature>
<feature type="compositionally biased region" description="Basic and acidic residues" evidence="5">
    <location>
        <begin position="93"/>
        <end position="116"/>
    </location>
</feature>
<feature type="compositionally biased region" description="Polar residues" evidence="5">
    <location>
        <begin position="120"/>
        <end position="133"/>
    </location>
</feature>
<feature type="compositionally biased region" description="Basic and acidic residues" evidence="5">
    <location>
        <begin position="143"/>
        <end position="156"/>
    </location>
</feature>
<feature type="compositionally biased region" description="Polar residues" evidence="5">
    <location>
        <begin position="162"/>
        <end position="172"/>
    </location>
</feature>
<feature type="compositionally biased region" description="Basic and acidic residues" evidence="5">
    <location>
        <begin position="200"/>
        <end position="227"/>
    </location>
</feature>
<feature type="compositionally biased region" description="Basic and acidic residues" evidence="5">
    <location>
        <begin position="271"/>
        <end position="297"/>
    </location>
</feature>
<feature type="compositionally biased region" description="Basic and acidic residues" evidence="5">
    <location>
        <begin position="305"/>
        <end position="372"/>
    </location>
</feature>
<feature type="compositionally biased region" description="Polar residues" evidence="5">
    <location>
        <begin position="459"/>
        <end position="471"/>
    </location>
</feature>
<feature type="compositionally biased region" description="Basic and acidic residues" evidence="5">
    <location>
        <begin position="503"/>
        <end position="522"/>
    </location>
</feature>
<feature type="modified residue" description="Phosphoserine" evidence="3">
    <location>
        <position position="123"/>
    </location>
</feature>
<feature type="modified residue" description="Phosphoserine; by CDK1" evidence="8">
    <location>
        <position position="249"/>
    </location>
</feature>
<feature type="modified residue" description="Phosphoserine" evidence="3">
    <location>
        <position position="382"/>
    </location>
</feature>
<feature type="modified residue" description="Phosphoserine" evidence="3">
    <location>
        <position position="395"/>
    </location>
</feature>
<feature type="modified residue" description="Phosphoserine; by CDK1" evidence="8">
    <location>
        <position position="462"/>
    </location>
</feature>
<feature type="modified residue" description="Phosphothreonine; by CDK1" evidence="8">
    <location>
        <position position="468"/>
    </location>
</feature>
<feature type="modified residue" description="Phosphoserine; by CDK1" evidence="8">
    <location>
        <position position="491"/>
    </location>
</feature>
<feature type="modified residue" description="Phosphoserine; by CDK1" evidence="8">
    <location>
        <position position="497"/>
    </location>
</feature>
<feature type="modified residue" description="Phosphoserine; by CDK1" evidence="8">
    <location>
        <position position="527"/>
    </location>
</feature>
<feature type="cross-link" description="Glycyl lysine isopeptide (Lys-Gly) (interchain with G-Cter in SUMO2)" evidence="3">
    <location>
        <position position="384"/>
    </location>
</feature>
<feature type="mutagenesis site" description="Decreases strongly phosphorylation-dependent actin binding." evidence="8">
    <original>S</original>
    <variation>A</variation>
    <location>
        <position position="249"/>
    </location>
</feature>
<feature type="mutagenesis site" description="Decreases phosphorylation-dependent actin binding." evidence="8">
    <original>S</original>
    <variation>A</variation>
    <location>
        <position position="462"/>
    </location>
</feature>
<feature type="mutagenesis site" description="Decreases phosphorylation-dependent actin binding." evidence="8">
    <original>T</original>
    <variation>A</variation>
    <location>
        <position position="468"/>
    </location>
</feature>
<feature type="mutagenesis site" description="Decreases phosphorylation-dependent actin binding." evidence="8">
    <original>S</original>
    <variation>A</variation>
    <location>
        <position position="491"/>
    </location>
</feature>
<feature type="mutagenesis site" description="Decreases phosphorylation-dependent actin binding." evidence="8">
    <original>S</original>
    <variation>A</variation>
    <location>
        <position position="497"/>
    </location>
</feature>
<feature type="mutagenesis site" description="Does not decrease phosphorylation-dependent actin binding." evidence="8">
    <original>S</original>
    <variation>A</variation>
    <location>
        <position position="527"/>
    </location>
</feature>
<dbReference type="EMBL" id="U18419">
    <property type="protein sequence ID" value="AAA68521.1"/>
    <property type="molecule type" value="mRNA"/>
</dbReference>
<dbReference type="PIR" id="A55887">
    <property type="entry name" value="A55887"/>
</dbReference>
<dbReference type="RefSeq" id="NP_037278.1">
    <property type="nucleotide sequence ID" value="NM_013146.2"/>
</dbReference>
<dbReference type="SMR" id="Q62736"/>
<dbReference type="BioGRID" id="247716">
    <property type="interactions" value="2"/>
</dbReference>
<dbReference type="FunCoup" id="Q62736">
    <property type="interactions" value="1275"/>
</dbReference>
<dbReference type="STRING" id="10116.ENSRNOP00000068857"/>
<dbReference type="iPTMnet" id="Q62736"/>
<dbReference type="PhosphoSitePlus" id="Q62736"/>
<dbReference type="PaxDb" id="10116-ENSRNOP00000043767"/>
<dbReference type="GeneID" id="25687"/>
<dbReference type="KEGG" id="rno:25687"/>
<dbReference type="UCSC" id="RGD:2256">
    <property type="organism name" value="rat"/>
</dbReference>
<dbReference type="AGR" id="RGD:2256"/>
<dbReference type="CTD" id="800"/>
<dbReference type="RGD" id="2256">
    <property type="gene designation" value="Cald1"/>
</dbReference>
<dbReference type="eggNOG" id="ENOG502QSYB">
    <property type="taxonomic scope" value="Eukaryota"/>
</dbReference>
<dbReference type="InParanoid" id="Q62736"/>
<dbReference type="PhylomeDB" id="Q62736"/>
<dbReference type="Reactome" id="R-RNO-445355">
    <property type="pathway name" value="Smooth Muscle Contraction"/>
</dbReference>
<dbReference type="PRO" id="PR:Q62736"/>
<dbReference type="Proteomes" id="UP000002494">
    <property type="component" value="Unplaced"/>
</dbReference>
<dbReference type="GO" id="GO:0030478">
    <property type="term" value="C:actin cap"/>
    <property type="evidence" value="ECO:0000266"/>
    <property type="project" value="RGD"/>
</dbReference>
<dbReference type="GO" id="GO:0015629">
    <property type="term" value="C:actin cytoskeleton"/>
    <property type="evidence" value="ECO:0000318"/>
    <property type="project" value="GO_Central"/>
</dbReference>
<dbReference type="GO" id="GO:0005884">
    <property type="term" value="C:actin filament"/>
    <property type="evidence" value="ECO:0000314"/>
    <property type="project" value="RGD"/>
</dbReference>
<dbReference type="GO" id="GO:0030425">
    <property type="term" value="C:dendrite"/>
    <property type="evidence" value="ECO:0000314"/>
    <property type="project" value="RGD"/>
</dbReference>
<dbReference type="GO" id="GO:0043197">
    <property type="term" value="C:dendritic spine"/>
    <property type="evidence" value="ECO:0000314"/>
    <property type="project" value="RGD"/>
</dbReference>
<dbReference type="GO" id="GO:0098978">
    <property type="term" value="C:glutamatergic synapse"/>
    <property type="evidence" value="ECO:0000314"/>
    <property type="project" value="SynGO"/>
</dbReference>
<dbReference type="GO" id="GO:0016020">
    <property type="term" value="C:membrane"/>
    <property type="evidence" value="ECO:0000266"/>
    <property type="project" value="RGD"/>
</dbReference>
<dbReference type="GO" id="GO:0030016">
    <property type="term" value="C:myofibril"/>
    <property type="evidence" value="ECO:0007669"/>
    <property type="project" value="UniProtKB-SubCell"/>
</dbReference>
<dbReference type="GO" id="GO:0043025">
    <property type="term" value="C:neuronal cell body"/>
    <property type="evidence" value="ECO:0000314"/>
    <property type="project" value="RGD"/>
</dbReference>
<dbReference type="GO" id="GO:0098794">
    <property type="term" value="C:postsynapse"/>
    <property type="evidence" value="ECO:0000314"/>
    <property type="project" value="SynGO"/>
</dbReference>
<dbReference type="GO" id="GO:0001725">
    <property type="term" value="C:stress fiber"/>
    <property type="evidence" value="ECO:0007669"/>
    <property type="project" value="UniProtKB-SubCell"/>
</dbReference>
<dbReference type="GO" id="GO:0003779">
    <property type="term" value="F:actin binding"/>
    <property type="evidence" value="ECO:0000314"/>
    <property type="project" value="RGD"/>
</dbReference>
<dbReference type="GO" id="GO:0005516">
    <property type="term" value="F:calmodulin binding"/>
    <property type="evidence" value="ECO:0007669"/>
    <property type="project" value="UniProtKB-KW"/>
</dbReference>
<dbReference type="GO" id="GO:0017022">
    <property type="term" value="F:myosin binding"/>
    <property type="evidence" value="ECO:0007669"/>
    <property type="project" value="InterPro"/>
</dbReference>
<dbReference type="GO" id="GO:0051017">
    <property type="term" value="P:actin filament bundle assembly"/>
    <property type="evidence" value="ECO:0000314"/>
    <property type="project" value="RGD"/>
</dbReference>
<dbReference type="GO" id="GO:0007565">
    <property type="term" value="P:female pregnancy"/>
    <property type="evidence" value="ECO:0000304"/>
    <property type="project" value="RGD"/>
</dbReference>
<dbReference type="GO" id="GO:0006936">
    <property type="term" value="P:muscle contraction"/>
    <property type="evidence" value="ECO:0007669"/>
    <property type="project" value="InterPro"/>
</dbReference>
<dbReference type="InterPro" id="IPR006017">
    <property type="entry name" value="Caldesmon"/>
</dbReference>
<dbReference type="InterPro" id="IPR006018">
    <property type="entry name" value="Caldesmon_LSP"/>
</dbReference>
<dbReference type="PANTHER" id="PTHR18949">
    <property type="entry name" value="CALDESMON"/>
    <property type="match status" value="1"/>
</dbReference>
<dbReference type="PANTHER" id="PTHR18949:SF0">
    <property type="entry name" value="CALDESMON"/>
    <property type="match status" value="1"/>
</dbReference>
<dbReference type="Pfam" id="PF02029">
    <property type="entry name" value="Caldesmon"/>
    <property type="match status" value="1"/>
</dbReference>
<dbReference type="PRINTS" id="PR01076">
    <property type="entry name" value="CALDESMON"/>
</dbReference>
<sequence length="531" mass="60584">MLSRSGSQGRRCLATLSQIAYQRNDDDEEEAARERRRRARQERLRQKQEEESLGQVTDQVEAHVQNSAPDEESKPATANAQVEGDEEAALLERLARREERRQKRLQEALERQKEFDPTITDGSLSVPSRRMQNNSAENETAEGEEKGESRSGRYEMEETEVVITSYQKNSYQDAEDKKKEEKEEEEEEEKLKGGNLGENQIKDEKIKKDKEPKEEVKNFLDRKKGFTEVKAQNGEFMTHKLKQTENAFSPSRSGGRASGDKEAEGAPQVEAGKRLEELRRRRGETESEEFEKLKQKQQEAALELEELKKKREERRKVLEEEEQRRKQEEADRKAREEEEKRRLKEEIERRRAEAAEKRQKMPEDGLSEDKKPFKCFTPKGSSLKIEERAEFLNKSVQKSGVKSTHQAAVVSKIDSRLEQYTNAIEGTKASKPMKPAASDLPVPAEGVRNIKSMWEKGSVFSSPSASGTPNKETAGLKVGVSSRINEWLTKSPDGNKSPAPKPSDLRPGDVSGKRNLWEKQSVDKVTSPTKV</sequence>
<comment type="function">
    <text evidence="6">Actin- and myosin-binding protein implicated in the regulation of actomyosin interactions in smooth muscle and nonmuscle cells (could act as a bridge between myosin and actin filaments). Stimulates actin binding of tropomyosin which increases the stabilization of actin filament structure. In muscle tissues, inhibits the actomyosin ATPase by binding to F-actin. This inhibition is attenuated by calcium-calmodulin and is potentiated by tropomyosin. Interacts with actin, myosin, two molecules of tropomyosin and with calmodulin. Also plays an essential role during cellular mitosis and receptor capping. Involved in Schwann cell migration during peripheral nerve regeneration.</text>
</comment>
<comment type="subcellular location">
    <subcellularLocation>
        <location evidence="2">Cytoplasm</location>
        <location evidence="2">Cytoskeleton</location>
    </subcellularLocation>
    <subcellularLocation>
        <location evidence="2">Cytoplasm</location>
        <location evidence="2">Myofibril</location>
    </subcellularLocation>
    <subcellularLocation>
        <location evidence="2">Cytoplasm</location>
        <location evidence="2">Cytoskeleton</location>
        <location evidence="2">Stress fiber</location>
    </subcellularLocation>
    <text evidence="2">On thin filaments in smooth muscle and on stress fibers in fibroblasts (nonmuscle).</text>
</comment>
<comment type="tissue specificity">
    <text>High-molecular-weight caldesmon (h-caldesmon) is predominantly expressed in smooth muscles, whereas low-molecular-weight caldesmon (l-caldesmon) is widely distributed in non-muscle tissues and cells. Not expressed in skeletal muscle or heart.</text>
</comment>
<comment type="domain">
    <text>The N-terminal part seems to be a myosin/calmodulin-binding domain, and the C-terminal a tropomyosin/actin/calmodulin-binding domain. These two domains are separated by a central helical region in the smooth-muscle form.</text>
</comment>
<comment type="PTM">
    <text evidence="6 7 8">In non-muscle cells, phosphorylation by CDK1 during mitosis causes caldesmon to dissociate from microfilaments. Phosphorylation reduces caldesmon binding to actin, myosin, and calmodulin as well as its inhibition of actomyosin ATPase activity. Phosphorylation also occurs in both quiescent and dividing smooth muscle cells with similar effects on the interaction with actin and calmodulin and on microfilaments reorganization. CDK1-mediated phosphorylation promotes Schwann cell migration during peripheral nerve regeneration.</text>
</comment>
<comment type="similarity">
    <text evidence="9">Belongs to the caldesmon family.</text>
</comment>
<accession>Q62736</accession>
<organism>
    <name type="scientific">Rattus norvegicus</name>
    <name type="common">Rat</name>
    <dbReference type="NCBI Taxonomy" id="10116"/>
    <lineage>
        <taxon>Eukaryota</taxon>
        <taxon>Metazoa</taxon>
        <taxon>Chordata</taxon>
        <taxon>Craniata</taxon>
        <taxon>Vertebrata</taxon>
        <taxon>Euteleostomi</taxon>
        <taxon>Mammalia</taxon>
        <taxon>Eutheria</taxon>
        <taxon>Euarchontoglires</taxon>
        <taxon>Glires</taxon>
        <taxon>Rodentia</taxon>
        <taxon>Myomorpha</taxon>
        <taxon>Muroidea</taxon>
        <taxon>Muridae</taxon>
        <taxon>Murinae</taxon>
        <taxon>Rattus</taxon>
    </lineage>
</organism>
<protein>
    <recommendedName>
        <fullName>Non-muscle caldesmon</fullName>
        <shortName>CDM</shortName>
    </recommendedName>
    <alternativeName>
        <fullName>L-caldesmon</fullName>
    </alternativeName>
</protein>
<name>CALD1_RAT</name>
<keyword id="KW-0009">Actin-binding</keyword>
<keyword id="KW-0112">Calmodulin-binding</keyword>
<keyword id="KW-0963">Cytoplasm</keyword>
<keyword id="KW-0206">Cytoskeleton</keyword>
<keyword id="KW-1017">Isopeptide bond</keyword>
<keyword id="KW-0514">Muscle protein</keyword>
<keyword id="KW-0597">Phosphoprotein</keyword>
<keyword id="KW-1185">Reference proteome</keyword>
<keyword id="KW-0832">Ubl conjugation</keyword>
<gene>
    <name type="primary">Cald1</name>
</gene>
<evidence type="ECO:0000250" key="1"/>
<evidence type="ECO:0000250" key="2">
    <source>
        <dbReference type="UniProtKB" id="P13505"/>
    </source>
</evidence>
<evidence type="ECO:0000250" key="3">
    <source>
        <dbReference type="UniProtKB" id="Q05682"/>
    </source>
</evidence>
<evidence type="ECO:0000255" key="4"/>
<evidence type="ECO:0000256" key="5">
    <source>
        <dbReference type="SAM" id="MobiDB-lite"/>
    </source>
</evidence>
<evidence type="ECO:0000269" key="6">
    <source>
    </source>
</evidence>
<evidence type="ECO:0000269" key="7">
    <source>
    </source>
</evidence>
<evidence type="ECO:0000269" key="8">
    <source>
    </source>
</evidence>
<evidence type="ECO:0000305" key="9"/>